<comment type="subcellular location">
    <subcellularLocation>
        <location>Plastid</location>
        <location>Chloroplast</location>
    </subcellularLocation>
</comment>
<comment type="similarity">
    <text evidence="1">Belongs to the bacterial ribosomal protein bL36 family.</text>
</comment>
<accession>Q95GN4</accession>
<proteinExistence type="inferred from homology"/>
<evidence type="ECO:0000255" key="1">
    <source>
        <dbReference type="HAMAP-Rule" id="MF_00251"/>
    </source>
</evidence>
<evidence type="ECO:0000305" key="2"/>
<geneLocation type="chloroplast"/>
<keyword id="KW-0150">Chloroplast</keyword>
<keyword id="KW-0934">Plastid</keyword>
<keyword id="KW-0687">Ribonucleoprotein</keyword>
<keyword id="KW-0689">Ribosomal protein</keyword>
<feature type="chain" id="PRO_0000126327" description="Large ribosomal subunit protein bL36c">
    <location>
        <begin position="1"/>
        <end position="37"/>
    </location>
</feature>
<protein>
    <recommendedName>
        <fullName evidence="1">Large ribosomal subunit protein bL36c</fullName>
    </recommendedName>
    <alternativeName>
        <fullName evidence="2">50S ribosomal protein L36, chloroplastic</fullName>
    </alternativeName>
</protein>
<gene>
    <name evidence="1" type="primary">rpl36</name>
</gene>
<name>RK36_MESCR</name>
<reference key="1">
    <citation type="journal article" date="2001" name="Plant Cell">
        <title>Many parallel losses of infA from chloroplast DNA during angiosperm evolution with multiple independent transfers to the nucleus.</title>
        <authorList>
            <person name="Millen R.S."/>
            <person name="Olmstead R.G."/>
            <person name="Adams K.L."/>
            <person name="Palmer J.D."/>
            <person name="Lao N.T."/>
            <person name="Heggie L."/>
            <person name="Kavanagh T.A."/>
            <person name="Hibberd J.M."/>
            <person name="Gray J.C."/>
            <person name="Morden C.W."/>
            <person name="Calie P.J."/>
            <person name="Jermiin L.S."/>
            <person name="Wolfe K.H."/>
        </authorList>
    </citation>
    <scope>NUCLEOTIDE SEQUENCE [GENOMIC DNA]</scope>
</reference>
<dbReference type="EMBL" id="AF347622">
    <property type="protein sequence ID" value="AAK38849.1"/>
    <property type="molecule type" value="Genomic_DNA"/>
</dbReference>
<dbReference type="RefSeq" id="YP_009221841.1">
    <property type="nucleotide sequence ID" value="NC_029049.1"/>
</dbReference>
<dbReference type="SMR" id="Q95GN4"/>
<dbReference type="GeneID" id="26738181"/>
<dbReference type="GO" id="GO:0009507">
    <property type="term" value="C:chloroplast"/>
    <property type="evidence" value="ECO:0007669"/>
    <property type="project" value="UniProtKB-SubCell"/>
</dbReference>
<dbReference type="GO" id="GO:1990904">
    <property type="term" value="C:ribonucleoprotein complex"/>
    <property type="evidence" value="ECO:0007669"/>
    <property type="project" value="UniProtKB-KW"/>
</dbReference>
<dbReference type="GO" id="GO:0005840">
    <property type="term" value="C:ribosome"/>
    <property type="evidence" value="ECO:0007669"/>
    <property type="project" value="UniProtKB-KW"/>
</dbReference>
<dbReference type="GO" id="GO:0003735">
    <property type="term" value="F:structural constituent of ribosome"/>
    <property type="evidence" value="ECO:0007669"/>
    <property type="project" value="InterPro"/>
</dbReference>
<dbReference type="GO" id="GO:0006412">
    <property type="term" value="P:translation"/>
    <property type="evidence" value="ECO:0007669"/>
    <property type="project" value="UniProtKB-UniRule"/>
</dbReference>
<dbReference type="HAMAP" id="MF_00251">
    <property type="entry name" value="Ribosomal_bL36"/>
    <property type="match status" value="1"/>
</dbReference>
<dbReference type="InterPro" id="IPR000473">
    <property type="entry name" value="Ribosomal_bL36"/>
</dbReference>
<dbReference type="InterPro" id="IPR035977">
    <property type="entry name" value="Ribosomal_bL36_sp"/>
</dbReference>
<dbReference type="NCBIfam" id="TIGR01022">
    <property type="entry name" value="rpmJ_bact"/>
    <property type="match status" value="1"/>
</dbReference>
<dbReference type="PANTHER" id="PTHR42888">
    <property type="entry name" value="50S RIBOSOMAL PROTEIN L36, CHLOROPLASTIC"/>
    <property type="match status" value="1"/>
</dbReference>
<dbReference type="PANTHER" id="PTHR42888:SF1">
    <property type="entry name" value="LARGE RIBOSOMAL SUBUNIT PROTEIN BL36C"/>
    <property type="match status" value="1"/>
</dbReference>
<dbReference type="Pfam" id="PF00444">
    <property type="entry name" value="Ribosomal_L36"/>
    <property type="match status" value="1"/>
</dbReference>
<dbReference type="SUPFAM" id="SSF57840">
    <property type="entry name" value="Ribosomal protein L36"/>
    <property type="match status" value="1"/>
</dbReference>
<dbReference type="PROSITE" id="PS00828">
    <property type="entry name" value="RIBOSOMAL_L36"/>
    <property type="match status" value="1"/>
</dbReference>
<sequence length="37" mass="4432">MKIRASVRKICEKCRLIRRRGRIIVICSNPKHKQRQG</sequence>
<organism>
    <name type="scientific">Mesembryanthemum crystallinum</name>
    <name type="common">Common ice plant</name>
    <name type="synonym">Cryophytum crystallinum</name>
    <dbReference type="NCBI Taxonomy" id="3544"/>
    <lineage>
        <taxon>Eukaryota</taxon>
        <taxon>Viridiplantae</taxon>
        <taxon>Streptophyta</taxon>
        <taxon>Embryophyta</taxon>
        <taxon>Tracheophyta</taxon>
        <taxon>Spermatophyta</taxon>
        <taxon>Magnoliopsida</taxon>
        <taxon>eudicotyledons</taxon>
        <taxon>Gunneridae</taxon>
        <taxon>Pentapetalae</taxon>
        <taxon>Caryophyllales</taxon>
        <taxon>Aizoaceae</taxon>
        <taxon>Mesembryanthemum</taxon>
        <taxon>Mesembryanthemum subgen. Cryophytum</taxon>
    </lineage>
</organism>